<feature type="chain" id="PRO_0000211732" description="DNA gyrase inhibitor YacG">
    <location>
        <begin position="1"/>
        <end position="64"/>
    </location>
</feature>
<feature type="region of interest" description="Disordered" evidence="2">
    <location>
        <begin position="42"/>
        <end position="64"/>
    </location>
</feature>
<feature type="compositionally biased region" description="Acidic residues" evidence="2">
    <location>
        <begin position="54"/>
        <end position="64"/>
    </location>
</feature>
<feature type="binding site" evidence="1">
    <location>
        <position position="9"/>
    </location>
    <ligand>
        <name>Zn(2+)</name>
        <dbReference type="ChEBI" id="CHEBI:29105"/>
    </ligand>
</feature>
<feature type="binding site" evidence="1">
    <location>
        <position position="12"/>
    </location>
    <ligand>
        <name>Zn(2+)</name>
        <dbReference type="ChEBI" id="CHEBI:29105"/>
    </ligand>
</feature>
<feature type="binding site" evidence="1">
    <location>
        <position position="28"/>
    </location>
    <ligand>
        <name>Zn(2+)</name>
        <dbReference type="ChEBI" id="CHEBI:29105"/>
    </ligand>
</feature>
<feature type="binding site" evidence="1">
    <location>
        <position position="32"/>
    </location>
    <ligand>
        <name>Zn(2+)</name>
        <dbReference type="ChEBI" id="CHEBI:29105"/>
    </ligand>
</feature>
<name>YACG_VIBVY</name>
<protein>
    <recommendedName>
        <fullName evidence="1">DNA gyrase inhibitor YacG</fullName>
    </recommendedName>
</protein>
<organism>
    <name type="scientific">Vibrio vulnificus (strain YJ016)</name>
    <dbReference type="NCBI Taxonomy" id="196600"/>
    <lineage>
        <taxon>Bacteria</taxon>
        <taxon>Pseudomonadati</taxon>
        <taxon>Pseudomonadota</taxon>
        <taxon>Gammaproteobacteria</taxon>
        <taxon>Vibrionales</taxon>
        <taxon>Vibrionaceae</taxon>
        <taxon>Vibrio</taxon>
    </lineage>
</organism>
<dbReference type="EMBL" id="BA000037">
    <property type="protein sequence ID" value="BAC95548.1"/>
    <property type="status" value="ALT_INIT"/>
    <property type="molecule type" value="Genomic_DNA"/>
</dbReference>
<dbReference type="RefSeq" id="WP_026060801.1">
    <property type="nucleotide sequence ID" value="NC_005139.1"/>
</dbReference>
<dbReference type="SMR" id="Q7MHT4"/>
<dbReference type="STRING" id="672.VV93_v1c24950"/>
<dbReference type="GeneID" id="93895876"/>
<dbReference type="KEGG" id="vvy:VV2784"/>
<dbReference type="eggNOG" id="COG3024">
    <property type="taxonomic scope" value="Bacteria"/>
</dbReference>
<dbReference type="HOGENOM" id="CLU_178280_3_1_6"/>
<dbReference type="Proteomes" id="UP000002675">
    <property type="component" value="Chromosome I"/>
</dbReference>
<dbReference type="GO" id="GO:0008657">
    <property type="term" value="F:DNA topoisomerase type II (double strand cut, ATP-hydrolyzing) inhibitor activity"/>
    <property type="evidence" value="ECO:0007669"/>
    <property type="project" value="UniProtKB-UniRule"/>
</dbReference>
<dbReference type="GO" id="GO:0008270">
    <property type="term" value="F:zinc ion binding"/>
    <property type="evidence" value="ECO:0007669"/>
    <property type="project" value="UniProtKB-UniRule"/>
</dbReference>
<dbReference type="GO" id="GO:0006355">
    <property type="term" value="P:regulation of DNA-templated transcription"/>
    <property type="evidence" value="ECO:0007669"/>
    <property type="project" value="InterPro"/>
</dbReference>
<dbReference type="Gene3D" id="3.30.50.10">
    <property type="entry name" value="Erythroid Transcription Factor GATA-1, subunit A"/>
    <property type="match status" value="1"/>
</dbReference>
<dbReference type="HAMAP" id="MF_00649">
    <property type="entry name" value="DNA_gyrase_inhibitor_YacG"/>
    <property type="match status" value="1"/>
</dbReference>
<dbReference type="InterPro" id="IPR005584">
    <property type="entry name" value="DNA_gyrase_inhibitor_YacG"/>
</dbReference>
<dbReference type="InterPro" id="IPR013088">
    <property type="entry name" value="Znf_NHR/GATA"/>
</dbReference>
<dbReference type="NCBIfam" id="NF001638">
    <property type="entry name" value="PRK00418.1"/>
    <property type="match status" value="1"/>
</dbReference>
<dbReference type="PANTHER" id="PTHR36150">
    <property type="entry name" value="DNA GYRASE INHIBITOR YACG"/>
    <property type="match status" value="1"/>
</dbReference>
<dbReference type="PANTHER" id="PTHR36150:SF1">
    <property type="entry name" value="DNA GYRASE INHIBITOR YACG"/>
    <property type="match status" value="1"/>
</dbReference>
<dbReference type="Pfam" id="PF03884">
    <property type="entry name" value="YacG"/>
    <property type="match status" value="1"/>
</dbReference>
<dbReference type="SUPFAM" id="SSF57716">
    <property type="entry name" value="Glucocorticoid receptor-like (DNA-binding domain)"/>
    <property type="match status" value="1"/>
</dbReference>
<sequence>MTKITIVKCPQCGTDVEWGEQSPHRPFCSKKCQMIDFGEWADEENAIPGAPDMSDSDGWSEEQY</sequence>
<proteinExistence type="inferred from homology"/>
<keyword id="KW-0479">Metal-binding</keyword>
<keyword id="KW-0862">Zinc</keyword>
<gene>
    <name evidence="1" type="primary">yacG</name>
    <name type="ordered locus">VV2784</name>
</gene>
<accession>Q7MHT4</accession>
<evidence type="ECO:0000255" key="1">
    <source>
        <dbReference type="HAMAP-Rule" id="MF_00649"/>
    </source>
</evidence>
<evidence type="ECO:0000256" key="2">
    <source>
        <dbReference type="SAM" id="MobiDB-lite"/>
    </source>
</evidence>
<evidence type="ECO:0000305" key="3"/>
<comment type="function">
    <text evidence="1">Inhibits all the catalytic activities of DNA gyrase by preventing its interaction with DNA. Acts by binding directly to the C-terminal domain of GyrB, which probably disrupts DNA binding by the gyrase.</text>
</comment>
<comment type="cofactor">
    <cofactor evidence="1">
        <name>Zn(2+)</name>
        <dbReference type="ChEBI" id="CHEBI:29105"/>
    </cofactor>
    <text evidence="1">Binds 1 zinc ion.</text>
</comment>
<comment type="subunit">
    <text evidence="1">Interacts with GyrB.</text>
</comment>
<comment type="similarity">
    <text evidence="1">Belongs to the DNA gyrase inhibitor YacG family.</text>
</comment>
<comment type="sequence caution" evidence="3">
    <conflict type="erroneous initiation">
        <sequence resource="EMBL-CDS" id="BAC95548"/>
    </conflict>
    <text>Extended N-terminus.</text>
</comment>
<reference key="1">
    <citation type="journal article" date="2003" name="Genome Res.">
        <title>Comparative genome analysis of Vibrio vulnificus, a marine pathogen.</title>
        <authorList>
            <person name="Chen C.-Y."/>
            <person name="Wu K.-M."/>
            <person name="Chang Y.-C."/>
            <person name="Chang C.-H."/>
            <person name="Tsai H.-C."/>
            <person name="Liao T.-L."/>
            <person name="Liu Y.-M."/>
            <person name="Chen H.-J."/>
            <person name="Shen A.B.-T."/>
            <person name="Li J.-C."/>
            <person name="Su T.-L."/>
            <person name="Shao C.-P."/>
            <person name="Lee C.-T."/>
            <person name="Hor L.-I."/>
            <person name="Tsai S.-F."/>
        </authorList>
    </citation>
    <scope>NUCLEOTIDE SEQUENCE [LARGE SCALE GENOMIC DNA]</scope>
    <source>
        <strain>YJ016</strain>
    </source>
</reference>